<protein>
    <recommendedName>
        <fullName evidence="1">GMP synthase [glutamine-hydrolyzing]</fullName>
        <ecNumber evidence="1">6.3.5.2</ecNumber>
    </recommendedName>
    <alternativeName>
        <fullName evidence="1">GMP synthetase</fullName>
    </alternativeName>
    <alternativeName>
        <fullName evidence="1">Glutamine amidotransferase</fullName>
    </alternativeName>
</protein>
<accession>Q5E763</accession>
<reference key="1">
    <citation type="journal article" date="2005" name="Proc. Natl. Acad. Sci. U.S.A.">
        <title>Complete genome sequence of Vibrio fischeri: a symbiotic bacterium with pathogenic congeners.</title>
        <authorList>
            <person name="Ruby E.G."/>
            <person name="Urbanowski M."/>
            <person name="Campbell J."/>
            <person name="Dunn A."/>
            <person name="Faini M."/>
            <person name="Gunsalus R."/>
            <person name="Lostroh P."/>
            <person name="Lupp C."/>
            <person name="McCann J."/>
            <person name="Millikan D."/>
            <person name="Schaefer A."/>
            <person name="Stabb E."/>
            <person name="Stevens A."/>
            <person name="Visick K."/>
            <person name="Whistler C."/>
            <person name="Greenberg E.P."/>
        </authorList>
    </citation>
    <scope>NUCLEOTIDE SEQUENCE [LARGE SCALE GENOMIC DNA]</scope>
    <source>
        <strain>ATCC 700601 / ES114</strain>
    </source>
</reference>
<feature type="chain" id="PRO_0000229485" description="GMP synthase [glutamine-hydrolyzing]">
    <location>
        <begin position="1"/>
        <end position="517"/>
    </location>
</feature>
<feature type="domain" description="Glutamine amidotransferase type-1" evidence="1">
    <location>
        <begin position="9"/>
        <end position="199"/>
    </location>
</feature>
<feature type="domain" description="GMPS ATP-PPase" evidence="1">
    <location>
        <begin position="200"/>
        <end position="392"/>
    </location>
</feature>
<feature type="active site" description="Nucleophile" evidence="1">
    <location>
        <position position="86"/>
    </location>
</feature>
<feature type="active site" evidence="1">
    <location>
        <position position="173"/>
    </location>
</feature>
<feature type="active site" evidence="1">
    <location>
        <position position="175"/>
    </location>
</feature>
<feature type="binding site" evidence="1">
    <location>
        <begin position="227"/>
        <end position="233"/>
    </location>
    <ligand>
        <name>ATP</name>
        <dbReference type="ChEBI" id="CHEBI:30616"/>
    </ligand>
</feature>
<proteinExistence type="inferred from homology"/>
<gene>
    <name evidence="1" type="primary">guaA</name>
    <name type="ordered locus">VF_0638</name>
</gene>
<sequence>MTTNIHDQRILILDFGSQYTQLVARRIREIGVYCELWSWDVEESDIRDFNPDGIILSGGPESVTEENSPRAPQYVFDSGVPVFGVCYGMQTMAEQLGGKVATSTEREFGYAAVQVTGESALFKDLEATQDVWMSHGDKVVEIPSDFVKIAETETCPYAAMANEEKKYYGVQFHPEVTHTKNGMKMLENFVLNVCGCEGLWTSASIIEDAVARIKEQVGDDEVILGLSGGVDSSVVAMLAHRAIGDKLTCVFVDNGLLRLNEADQVMEMFGNKFGLNIVHVNAEQRFLDALEGESDPETKRKIIGHVFVDIFDEESKKLKNAKWLAQGTIYPDVIESAASKTGKAHVIKSHHNVGGLPDDMEMGLVEPLRELFKDEVRKIGLELGLPYNMLYRHPFPGPGLGVRVLGEIKKEYCDLLRRADAIFIEELHNADLYNKVSQAFTVFLPVRSVGVMGDGRKYDWVVSLRAVETIDFMTAHWAHLPYDFLGKVSNRIINEVNGISRVVYDISGKPPATIEWE</sequence>
<name>GUAA_ALIF1</name>
<organism>
    <name type="scientific">Aliivibrio fischeri (strain ATCC 700601 / ES114)</name>
    <name type="common">Vibrio fischeri</name>
    <dbReference type="NCBI Taxonomy" id="312309"/>
    <lineage>
        <taxon>Bacteria</taxon>
        <taxon>Pseudomonadati</taxon>
        <taxon>Pseudomonadota</taxon>
        <taxon>Gammaproteobacteria</taxon>
        <taxon>Vibrionales</taxon>
        <taxon>Vibrionaceae</taxon>
        <taxon>Aliivibrio</taxon>
    </lineage>
</organism>
<keyword id="KW-0067">ATP-binding</keyword>
<keyword id="KW-0315">Glutamine amidotransferase</keyword>
<keyword id="KW-0332">GMP biosynthesis</keyword>
<keyword id="KW-0436">Ligase</keyword>
<keyword id="KW-0547">Nucleotide-binding</keyword>
<keyword id="KW-0658">Purine biosynthesis</keyword>
<keyword id="KW-1185">Reference proteome</keyword>
<comment type="function">
    <text evidence="1">Catalyzes the synthesis of GMP from XMP.</text>
</comment>
<comment type="catalytic activity">
    <reaction evidence="1">
        <text>XMP + L-glutamine + ATP + H2O = GMP + L-glutamate + AMP + diphosphate + 2 H(+)</text>
        <dbReference type="Rhea" id="RHEA:11680"/>
        <dbReference type="ChEBI" id="CHEBI:15377"/>
        <dbReference type="ChEBI" id="CHEBI:15378"/>
        <dbReference type="ChEBI" id="CHEBI:29985"/>
        <dbReference type="ChEBI" id="CHEBI:30616"/>
        <dbReference type="ChEBI" id="CHEBI:33019"/>
        <dbReference type="ChEBI" id="CHEBI:57464"/>
        <dbReference type="ChEBI" id="CHEBI:58115"/>
        <dbReference type="ChEBI" id="CHEBI:58359"/>
        <dbReference type="ChEBI" id="CHEBI:456215"/>
        <dbReference type="EC" id="6.3.5.2"/>
    </reaction>
</comment>
<comment type="pathway">
    <text evidence="1">Purine metabolism; GMP biosynthesis; GMP from XMP (L-Gln route): step 1/1.</text>
</comment>
<comment type="subunit">
    <text evidence="1">Homodimer.</text>
</comment>
<evidence type="ECO:0000255" key="1">
    <source>
        <dbReference type="HAMAP-Rule" id="MF_00344"/>
    </source>
</evidence>
<dbReference type="EC" id="6.3.5.2" evidence="1"/>
<dbReference type="EMBL" id="CP000020">
    <property type="protein sequence ID" value="AAW85133.1"/>
    <property type="molecule type" value="Genomic_DNA"/>
</dbReference>
<dbReference type="RefSeq" id="WP_011261372.1">
    <property type="nucleotide sequence ID" value="NC_006840.2"/>
</dbReference>
<dbReference type="RefSeq" id="YP_204021.1">
    <property type="nucleotide sequence ID" value="NC_006840.2"/>
</dbReference>
<dbReference type="SMR" id="Q5E763"/>
<dbReference type="STRING" id="312309.VF_0638"/>
<dbReference type="MEROPS" id="C26.957"/>
<dbReference type="EnsemblBacteria" id="AAW85133">
    <property type="protein sequence ID" value="AAW85133"/>
    <property type="gene ID" value="VF_0638"/>
</dbReference>
<dbReference type="GeneID" id="54163291"/>
<dbReference type="KEGG" id="vfi:VF_0638"/>
<dbReference type="PATRIC" id="fig|312309.11.peg.630"/>
<dbReference type="eggNOG" id="COG0518">
    <property type="taxonomic scope" value="Bacteria"/>
</dbReference>
<dbReference type="eggNOG" id="COG0519">
    <property type="taxonomic scope" value="Bacteria"/>
</dbReference>
<dbReference type="HOGENOM" id="CLU_014340_0_5_6"/>
<dbReference type="OrthoDB" id="9802219at2"/>
<dbReference type="UniPathway" id="UPA00189">
    <property type="reaction ID" value="UER00296"/>
</dbReference>
<dbReference type="Proteomes" id="UP000000537">
    <property type="component" value="Chromosome I"/>
</dbReference>
<dbReference type="GO" id="GO:0005829">
    <property type="term" value="C:cytosol"/>
    <property type="evidence" value="ECO:0007669"/>
    <property type="project" value="TreeGrafter"/>
</dbReference>
<dbReference type="GO" id="GO:0005524">
    <property type="term" value="F:ATP binding"/>
    <property type="evidence" value="ECO:0007669"/>
    <property type="project" value="UniProtKB-UniRule"/>
</dbReference>
<dbReference type="GO" id="GO:0003921">
    <property type="term" value="F:GMP synthase activity"/>
    <property type="evidence" value="ECO:0007669"/>
    <property type="project" value="InterPro"/>
</dbReference>
<dbReference type="CDD" id="cd01742">
    <property type="entry name" value="GATase1_GMP_Synthase"/>
    <property type="match status" value="1"/>
</dbReference>
<dbReference type="CDD" id="cd01997">
    <property type="entry name" value="GMP_synthase_C"/>
    <property type="match status" value="1"/>
</dbReference>
<dbReference type="FunFam" id="3.30.300.10:FF:000002">
    <property type="entry name" value="GMP synthase [glutamine-hydrolyzing]"/>
    <property type="match status" value="1"/>
</dbReference>
<dbReference type="FunFam" id="3.40.50.620:FF:000001">
    <property type="entry name" value="GMP synthase [glutamine-hydrolyzing]"/>
    <property type="match status" value="1"/>
</dbReference>
<dbReference type="FunFam" id="3.40.50.880:FF:000001">
    <property type="entry name" value="GMP synthase [glutamine-hydrolyzing]"/>
    <property type="match status" value="1"/>
</dbReference>
<dbReference type="Gene3D" id="3.30.300.10">
    <property type="match status" value="1"/>
</dbReference>
<dbReference type="Gene3D" id="3.40.50.880">
    <property type="match status" value="1"/>
</dbReference>
<dbReference type="Gene3D" id="3.40.50.620">
    <property type="entry name" value="HUPs"/>
    <property type="match status" value="1"/>
</dbReference>
<dbReference type="HAMAP" id="MF_00344">
    <property type="entry name" value="GMP_synthase"/>
    <property type="match status" value="1"/>
</dbReference>
<dbReference type="InterPro" id="IPR029062">
    <property type="entry name" value="Class_I_gatase-like"/>
</dbReference>
<dbReference type="InterPro" id="IPR017926">
    <property type="entry name" value="GATASE"/>
</dbReference>
<dbReference type="InterPro" id="IPR001674">
    <property type="entry name" value="GMP_synth_C"/>
</dbReference>
<dbReference type="InterPro" id="IPR004739">
    <property type="entry name" value="GMP_synth_GATase"/>
</dbReference>
<dbReference type="InterPro" id="IPR022955">
    <property type="entry name" value="GMP_synthase"/>
</dbReference>
<dbReference type="InterPro" id="IPR025777">
    <property type="entry name" value="GMPS_ATP_PPase_dom"/>
</dbReference>
<dbReference type="InterPro" id="IPR022310">
    <property type="entry name" value="NAD/GMP_synthase"/>
</dbReference>
<dbReference type="InterPro" id="IPR014729">
    <property type="entry name" value="Rossmann-like_a/b/a_fold"/>
</dbReference>
<dbReference type="NCBIfam" id="TIGR00884">
    <property type="entry name" value="guaA_Cterm"/>
    <property type="match status" value="1"/>
</dbReference>
<dbReference type="NCBIfam" id="TIGR00888">
    <property type="entry name" value="guaA_Nterm"/>
    <property type="match status" value="1"/>
</dbReference>
<dbReference type="NCBIfam" id="NF000848">
    <property type="entry name" value="PRK00074.1"/>
    <property type="match status" value="1"/>
</dbReference>
<dbReference type="PANTHER" id="PTHR11922:SF2">
    <property type="entry name" value="GMP SYNTHASE [GLUTAMINE-HYDROLYZING]"/>
    <property type="match status" value="1"/>
</dbReference>
<dbReference type="PANTHER" id="PTHR11922">
    <property type="entry name" value="GMP SYNTHASE-RELATED"/>
    <property type="match status" value="1"/>
</dbReference>
<dbReference type="Pfam" id="PF00117">
    <property type="entry name" value="GATase"/>
    <property type="match status" value="1"/>
</dbReference>
<dbReference type="Pfam" id="PF00958">
    <property type="entry name" value="GMP_synt_C"/>
    <property type="match status" value="1"/>
</dbReference>
<dbReference type="Pfam" id="PF02540">
    <property type="entry name" value="NAD_synthase"/>
    <property type="match status" value="1"/>
</dbReference>
<dbReference type="PRINTS" id="PR00097">
    <property type="entry name" value="ANTSNTHASEII"/>
</dbReference>
<dbReference type="PRINTS" id="PR00099">
    <property type="entry name" value="CPSGATASE"/>
</dbReference>
<dbReference type="PRINTS" id="PR00096">
    <property type="entry name" value="GATASE"/>
</dbReference>
<dbReference type="SUPFAM" id="SSF52402">
    <property type="entry name" value="Adenine nucleotide alpha hydrolases-like"/>
    <property type="match status" value="1"/>
</dbReference>
<dbReference type="SUPFAM" id="SSF52317">
    <property type="entry name" value="Class I glutamine amidotransferase-like"/>
    <property type="match status" value="1"/>
</dbReference>
<dbReference type="SUPFAM" id="SSF54810">
    <property type="entry name" value="GMP synthetase C-terminal dimerisation domain"/>
    <property type="match status" value="1"/>
</dbReference>
<dbReference type="PROSITE" id="PS51273">
    <property type="entry name" value="GATASE_TYPE_1"/>
    <property type="match status" value="1"/>
</dbReference>
<dbReference type="PROSITE" id="PS51553">
    <property type="entry name" value="GMPS_ATP_PPASE"/>
    <property type="match status" value="1"/>
</dbReference>